<keyword id="KW-0509">mRNA transport</keyword>
<keyword id="KW-0906">Nuclear pore complex</keyword>
<keyword id="KW-0539">Nucleus</keyword>
<keyword id="KW-0653">Protein transport</keyword>
<keyword id="KW-1185">Reference proteome</keyword>
<keyword id="KW-0811">Translocation</keyword>
<keyword id="KW-0813">Transport</keyword>
<evidence type="ECO:0000250" key="1"/>
<evidence type="ECO:0000255" key="2">
    <source>
        <dbReference type="PROSITE-ProRule" id="PRU00164"/>
    </source>
</evidence>
<evidence type="ECO:0000256" key="3">
    <source>
        <dbReference type="SAM" id="MobiDB-lite"/>
    </source>
</evidence>
<evidence type="ECO:0000269" key="4">
    <source>
    </source>
</evidence>
<evidence type="ECO:0000305" key="5"/>
<comment type="subunit">
    <text evidence="4">Interacts with the GTP-bound form of RAN1, RAN2 and RAN3.</text>
</comment>
<comment type="subcellular location">
    <subcellularLocation>
        <location evidence="1">Nucleus</location>
        <location evidence="1">Nuclear pore complex</location>
    </subcellularLocation>
</comment>
<comment type="tissue specificity">
    <text evidence="4">Ubiquitous. Preferentially expressed in root tips and gynoecium.</text>
</comment>
<comment type="sequence caution" evidence="5">
    <conflict type="frameshift">
        <sequence resource="EMBL-CDS" id="AAD39835"/>
    </conflict>
</comment>
<comment type="sequence caution" evidence="5">
    <conflict type="frameshift">
        <sequence resource="EMBL-CDS" id="CAA66045"/>
    </conflict>
</comment>
<proteinExistence type="evidence at protein level"/>
<reference key="1">
    <citation type="journal article" date="1997" name="Plant J.">
        <title>Characterization of proteins that interact with the GTP-bound form of the regulatory GTPase Ran in Arabidopsis.</title>
        <authorList>
            <person name="Haizel T."/>
            <person name="Merkle T."/>
            <person name="Pay A."/>
            <person name="Fejes E."/>
            <person name="Nagy F."/>
        </authorList>
    </citation>
    <scope>NUCLEOTIDE SEQUENCE [MRNA]</scope>
    <scope>CHARACTERIZATION</scope>
    <scope>TISSUE SPECIFICITY</scope>
    <scope>INTERACTION WITH RAN1; RAN2 AND RAN3</scope>
</reference>
<reference key="2">
    <citation type="submission" date="1998-04" db="EMBL/GenBank/DDBJ databases">
        <title>Isolation of cDNA encoding siRanBP protein.</title>
        <authorList>
            <person name="Pih K.T."/>
            <person name="Jang H.J."/>
            <person name="Kang S.G."/>
            <person name="Piao H.L."/>
            <person name="Lim J.H."/>
            <person name="Jin J.B."/>
            <person name="Hwang I.H."/>
        </authorList>
    </citation>
    <scope>NUCLEOTIDE SEQUENCE [MRNA]</scope>
    <source>
        <strain>cv. Columbia</strain>
    </source>
</reference>
<reference key="3">
    <citation type="journal article" date="2000" name="Nature">
        <title>Sequence and analysis of chromosome 1 of the plant Arabidopsis thaliana.</title>
        <authorList>
            <person name="Theologis A."/>
            <person name="Ecker J.R."/>
            <person name="Palm C.J."/>
            <person name="Federspiel N.A."/>
            <person name="Kaul S."/>
            <person name="White O."/>
            <person name="Alonso J."/>
            <person name="Altafi H."/>
            <person name="Araujo R."/>
            <person name="Bowman C.L."/>
            <person name="Brooks S.Y."/>
            <person name="Buehler E."/>
            <person name="Chan A."/>
            <person name="Chao Q."/>
            <person name="Chen H."/>
            <person name="Cheuk R.F."/>
            <person name="Chin C.W."/>
            <person name="Chung M.K."/>
            <person name="Conn L."/>
            <person name="Conway A.B."/>
            <person name="Conway A.R."/>
            <person name="Creasy T.H."/>
            <person name="Dewar K."/>
            <person name="Dunn P."/>
            <person name="Etgu P."/>
            <person name="Feldblyum T.V."/>
            <person name="Feng J.-D."/>
            <person name="Fong B."/>
            <person name="Fujii C.Y."/>
            <person name="Gill J.E."/>
            <person name="Goldsmith A.D."/>
            <person name="Haas B."/>
            <person name="Hansen N.F."/>
            <person name="Hughes B."/>
            <person name="Huizar L."/>
            <person name="Hunter J.L."/>
            <person name="Jenkins J."/>
            <person name="Johnson-Hopson C."/>
            <person name="Khan S."/>
            <person name="Khaykin E."/>
            <person name="Kim C.J."/>
            <person name="Koo H.L."/>
            <person name="Kremenetskaia I."/>
            <person name="Kurtz D.B."/>
            <person name="Kwan A."/>
            <person name="Lam B."/>
            <person name="Langin-Hooper S."/>
            <person name="Lee A."/>
            <person name="Lee J.M."/>
            <person name="Lenz C.A."/>
            <person name="Li J.H."/>
            <person name="Li Y.-P."/>
            <person name="Lin X."/>
            <person name="Liu S.X."/>
            <person name="Liu Z.A."/>
            <person name="Luros J.S."/>
            <person name="Maiti R."/>
            <person name="Marziali A."/>
            <person name="Militscher J."/>
            <person name="Miranda M."/>
            <person name="Nguyen M."/>
            <person name="Nierman W.C."/>
            <person name="Osborne B.I."/>
            <person name="Pai G."/>
            <person name="Peterson J."/>
            <person name="Pham P.K."/>
            <person name="Rizzo M."/>
            <person name="Rooney T."/>
            <person name="Rowley D."/>
            <person name="Sakano H."/>
            <person name="Salzberg S.L."/>
            <person name="Schwartz J.R."/>
            <person name="Shinn P."/>
            <person name="Southwick A.M."/>
            <person name="Sun H."/>
            <person name="Tallon L.J."/>
            <person name="Tambunga G."/>
            <person name="Toriumi M.J."/>
            <person name="Town C.D."/>
            <person name="Utterback T."/>
            <person name="Van Aken S."/>
            <person name="Vaysberg M."/>
            <person name="Vysotskaia V.S."/>
            <person name="Walker M."/>
            <person name="Wu D."/>
            <person name="Yu G."/>
            <person name="Fraser C.M."/>
            <person name="Venter J.C."/>
            <person name="Davis R.W."/>
        </authorList>
    </citation>
    <scope>NUCLEOTIDE SEQUENCE [LARGE SCALE GENOMIC DNA]</scope>
    <source>
        <strain>cv. Columbia</strain>
    </source>
</reference>
<reference key="4">
    <citation type="journal article" date="2017" name="Plant J.">
        <title>Araport11: a complete reannotation of the Arabidopsis thaliana reference genome.</title>
        <authorList>
            <person name="Cheng C.Y."/>
            <person name="Krishnakumar V."/>
            <person name="Chan A.P."/>
            <person name="Thibaud-Nissen F."/>
            <person name="Schobel S."/>
            <person name="Town C.D."/>
        </authorList>
    </citation>
    <scope>GENOME REANNOTATION</scope>
    <source>
        <strain>cv. Columbia</strain>
    </source>
</reference>
<reference key="5">
    <citation type="journal article" date="2003" name="Science">
        <title>Empirical analysis of transcriptional activity in the Arabidopsis genome.</title>
        <authorList>
            <person name="Yamada K."/>
            <person name="Lim J."/>
            <person name="Dale J.M."/>
            <person name="Chen H."/>
            <person name="Shinn P."/>
            <person name="Palm C.J."/>
            <person name="Southwick A.M."/>
            <person name="Wu H.C."/>
            <person name="Kim C.J."/>
            <person name="Nguyen M."/>
            <person name="Pham P.K."/>
            <person name="Cheuk R.F."/>
            <person name="Karlin-Newmann G."/>
            <person name="Liu S.X."/>
            <person name="Lam B."/>
            <person name="Sakano H."/>
            <person name="Wu T."/>
            <person name="Yu G."/>
            <person name="Miranda M."/>
            <person name="Quach H.L."/>
            <person name="Tripp M."/>
            <person name="Chang C.H."/>
            <person name="Lee J.M."/>
            <person name="Toriumi M.J."/>
            <person name="Chan M.M."/>
            <person name="Tang C.C."/>
            <person name="Onodera C.S."/>
            <person name="Deng J.M."/>
            <person name="Akiyama K."/>
            <person name="Ansari Y."/>
            <person name="Arakawa T."/>
            <person name="Banh J."/>
            <person name="Banno F."/>
            <person name="Bowser L."/>
            <person name="Brooks S.Y."/>
            <person name="Carninci P."/>
            <person name="Chao Q."/>
            <person name="Choy N."/>
            <person name="Enju A."/>
            <person name="Goldsmith A.D."/>
            <person name="Gurjal M."/>
            <person name="Hansen N.F."/>
            <person name="Hayashizaki Y."/>
            <person name="Johnson-Hopson C."/>
            <person name="Hsuan V.W."/>
            <person name="Iida K."/>
            <person name="Karnes M."/>
            <person name="Khan S."/>
            <person name="Koesema E."/>
            <person name="Ishida J."/>
            <person name="Jiang P.X."/>
            <person name="Jones T."/>
            <person name="Kawai J."/>
            <person name="Kamiya A."/>
            <person name="Meyers C."/>
            <person name="Nakajima M."/>
            <person name="Narusaka M."/>
            <person name="Seki M."/>
            <person name="Sakurai T."/>
            <person name="Satou M."/>
            <person name="Tamse R."/>
            <person name="Vaysberg M."/>
            <person name="Wallender E.K."/>
            <person name="Wong C."/>
            <person name="Yamamura Y."/>
            <person name="Yuan S."/>
            <person name="Shinozaki K."/>
            <person name="Davis R.W."/>
            <person name="Theologis A."/>
            <person name="Ecker J.R."/>
        </authorList>
    </citation>
    <scope>NUCLEOTIDE SEQUENCE [LARGE SCALE MRNA]</scope>
    <source>
        <strain>cv. Columbia</strain>
    </source>
</reference>
<accession>Q9LMK7</accession>
<accession>O04149</accession>
<accession>Q9XHS1</accession>
<feature type="chain" id="PRO_0000097187" description="Ran-binding protein 1 homolog a">
    <location>
        <begin position="1"/>
        <end position="228"/>
    </location>
</feature>
<feature type="domain" description="RanBD1" evidence="2">
    <location>
        <begin position="27"/>
        <end position="162"/>
    </location>
</feature>
<feature type="region of interest" description="Disordered" evidence="3">
    <location>
        <begin position="1"/>
        <end position="30"/>
    </location>
</feature>
<feature type="region of interest" description="Disordered" evidence="3">
    <location>
        <begin position="159"/>
        <end position="228"/>
    </location>
</feature>
<feature type="compositionally biased region" description="Basic and acidic residues" evidence="3">
    <location>
        <begin position="1"/>
        <end position="13"/>
    </location>
</feature>
<feature type="compositionally biased region" description="Acidic residues" evidence="3">
    <location>
        <begin position="14"/>
        <end position="24"/>
    </location>
</feature>
<feature type="compositionally biased region" description="Basic and acidic residues" evidence="3">
    <location>
        <begin position="179"/>
        <end position="228"/>
    </location>
</feature>
<feature type="sequence conflict" description="In Ref. 2; AAD39835." evidence="5" ref="2">
    <original>K</original>
    <variation>N</variation>
    <location>
        <position position="75"/>
    </location>
</feature>
<feature type="sequence conflict" description="In Ref. 2; AAD39835." evidence="5" ref="2">
    <original>R</original>
    <variation>P</variation>
    <location>
        <position position="86"/>
    </location>
</feature>
<feature type="sequence conflict" description="In Ref. 2; AAD39835." evidence="5" ref="2">
    <original>V</original>
    <variation>L</variation>
    <location>
        <position position="103"/>
    </location>
</feature>
<feature type="sequence conflict" description="In Ref. 2; AAD39835." evidence="5" ref="2">
    <original>K</original>
    <variation>Q</variation>
    <location>
        <position position="132"/>
    </location>
</feature>
<feature type="sequence conflict" description="In Ref. 2; AAD39835." evidence="5" ref="2">
    <original>C</original>
    <variation>Y</variation>
    <location>
        <position position="137"/>
    </location>
</feature>
<feature type="sequence conflict" description="In Ref. 1; CAA66045." evidence="5" ref="1">
    <original>A</original>
    <variation>L</variation>
    <location>
        <position position="194"/>
    </location>
</feature>
<name>RBP1A_ARATH</name>
<gene>
    <name type="primary">RANBP1A</name>
    <name type="synonym">SIRANBP</name>
    <name type="ordered locus">At1g07140</name>
    <name type="ORF">F10K1.15</name>
</gene>
<organism>
    <name type="scientific">Arabidopsis thaliana</name>
    <name type="common">Mouse-ear cress</name>
    <dbReference type="NCBI Taxonomy" id="3702"/>
    <lineage>
        <taxon>Eukaryota</taxon>
        <taxon>Viridiplantae</taxon>
        <taxon>Streptophyta</taxon>
        <taxon>Embryophyta</taxon>
        <taxon>Tracheophyta</taxon>
        <taxon>Spermatophyta</taxon>
        <taxon>Magnoliopsida</taxon>
        <taxon>eudicotyledons</taxon>
        <taxon>Gunneridae</taxon>
        <taxon>Pentapetalae</taxon>
        <taxon>rosids</taxon>
        <taxon>malvids</taxon>
        <taxon>Brassicales</taxon>
        <taxon>Brassicaceae</taxon>
        <taxon>Camelineae</taxon>
        <taxon>Arabidopsis</taxon>
    </lineage>
</organism>
<protein>
    <recommendedName>
        <fullName>Ran-binding protein 1 homolog a</fullName>
    </recommendedName>
    <alternativeName>
        <fullName>Ran-binding protein siRanBP</fullName>
    </alternativeName>
</protein>
<sequence length="228" mass="25601">MATNEPEHEHRDEEEAGANEDEDTGAQVAPIVRLEEVAVTTGEEDEDAVLDLKSKLYRFDKDANQWKERGAGTVKFLKHKNTGKIRLVMRQSKTLKICANHFVKSGMSVQEHVGNEKSCVWHARDFADGELKDELFCIRFASIENCKTFMQKFKEVAESEEEKEESKDAADTAGLLEKLTVEETKTEEKTEAKAVETAKTEVKAEEKKESEAEKSGEAKKTEESGPST</sequence>
<dbReference type="EMBL" id="X97377">
    <property type="protein sequence ID" value="CAA66045.1"/>
    <property type="status" value="ALT_FRAME"/>
    <property type="molecule type" value="mRNA"/>
</dbReference>
<dbReference type="EMBL" id="AF057024">
    <property type="protein sequence ID" value="AAD39835.1"/>
    <property type="status" value="ALT_FRAME"/>
    <property type="molecule type" value="mRNA"/>
</dbReference>
<dbReference type="EMBL" id="AC067971">
    <property type="protein sequence ID" value="AAF82206.1"/>
    <property type="molecule type" value="Genomic_DNA"/>
</dbReference>
<dbReference type="EMBL" id="CP002684">
    <property type="protein sequence ID" value="AEE28081.1"/>
    <property type="molecule type" value="Genomic_DNA"/>
</dbReference>
<dbReference type="EMBL" id="AF370491">
    <property type="protein sequence ID" value="AAK43868.1"/>
    <property type="molecule type" value="mRNA"/>
</dbReference>
<dbReference type="EMBL" id="AF410294">
    <property type="protein sequence ID" value="AAK95280.1"/>
    <property type="molecule type" value="mRNA"/>
</dbReference>
<dbReference type="EMBL" id="AY097364">
    <property type="protein sequence ID" value="AAM19880.1"/>
    <property type="molecule type" value="mRNA"/>
</dbReference>
<dbReference type="EMBL" id="BT002193">
    <property type="protein sequence ID" value="AAN72204.1"/>
    <property type="molecule type" value="mRNA"/>
</dbReference>
<dbReference type="PIR" id="D86206">
    <property type="entry name" value="D86206"/>
</dbReference>
<dbReference type="RefSeq" id="NP_172194.1">
    <property type="nucleotide sequence ID" value="NM_100588.4"/>
</dbReference>
<dbReference type="SMR" id="Q9LMK7"/>
<dbReference type="BioGRID" id="22466">
    <property type="interactions" value="8"/>
</dbReference>
<dbReference type="FunCoup" id="Q9LMK7">
    <property type="interactions" value="4183"/>
</dbReference>
<dbReference type="IntAct" id="Q9LMK7">
    <property type="interactions" value="3"/>
</dbReference>
<dbReference type="STRING" id="3702.Q9LMK7"/>
<dbReference type="iPTMnet" id="Q9LMK7"/>
<dbReference type="MetOSite" id="Q9LMK7"/>
<dbReference type="PaxDb" id="3702-AT1G07140.1"/>
<dbReference type="ProteomicsDB" id="225960"/>
<dbReference type="EnsemblPlants" id="AT1G07140.1">
    <property type="protein sequence ID" value="AT1G07140.1"/>
    <property type="gene ID" value="AT1G07140"/>
</dbReference>
<dbReference type="GeneID" id="837225"/>
<dbReference type="Gramene" id="AT1G07140.1">
    <property type="protein sequence ID" value="AT1G07140.1"/>
    <property type="gene ID" value="AT1G07140"/>
</dbReference>
<dbReference type="KEGG" id="ath:AT1G07140"/>
<dbReference type="Araport" id="AT1G07140"/>
<dbReference type="TAIR" id="AT1G07140">
    <property type="gene designation" value="SIRANBP"/>
</dbReference>
<dbReference type="eggNOG" id="KOG0864">
    <property type="taxonomic scope" value="Eukaryota"/>
</dbReference>
<dbReference type="HOGENOM" id="CLU_067861_1_0_1"/>
<dbReference type="InParanoid" id="Q9LMK7"/>
<dbReference type="OMA" id="HFVTPWM"/>
<dbReference type="OrthoDB" id="2357150at2759"/>
<dbReference type="PhylomeDB" id="Q9LMK7"/>
<dbReference type="CD-CODE" id="4299E36E">
    <property type="entry name" value="Nucleolus"/>
</dbReference>
<dbReference type="PRO" id="PR:Q9LMK7"/>
<dbReference type="Proteomes" id="UP000006548">
    <property type="component" value="Chromosome 1"/>
</dbReference>
<dbReference type="ExpressionAtlas" id="Q9LMK7">
    <property type="expression patterns" value="baseline and differential"/>
</dbReference>
<dbReference type="GO" id="GO:0005829">
    <property type="term" value="C:cytosol"/>
    <property type="evidence" value="ECO:0007005"/>
    <property type="project" value="TAIR"/>
</dbReference>
<dbReference type="GO" id="GO:0005576">
    <property type="term" value="C:extracellular region"/>
    <property type="evidence" value="ECO:0007005"/>
    <property type="project" value="TAIR"/>
</dbReference>
<dbReference type="GO" id="GO:0005643">
    <property type="term" value="C:nuclear pore"/>
    <property type="evidence" value="ECO:0007669"/>
    <property type="project" value="UniProtKB-SubCell"/>
</dbReference>
<dbReference type="GO" id="GO:0051028">
    <property type="term" value="P:mRNA transport"/>
    <property type="evidence" value="ECO:0007669"/>
    <property type="project" value="UniProtKB-KW"/>
</dbReference>
<dbReference type="GO" id="GO:0006913">
    <property type="term" value="P:nucleocytoplasmic transport"/>
    <property type="evidence" value="ECO:0007669"/>
    <property type="project" value="InterPro"/>
</dbReference>
<dbReference type="GO" id="GO:0015031">
    <property type="term" value="P:protein transport"/>
    <property type="evidence" value="ECO:0007669"/>
    <property type="project" value="UniProtKB-KW"/>
</dbReference>
<dbReference type="CDD" id="cd13179">
    <property type="entry name" value="RanBD_RanBP1"/>
    <property type="match status" value="1"/>
</dbReference>
<dbReference type="FunFam" id="2.30.29.30:FF:000245">
    <property type="entry name" value="Ran-binding protein 1 b"/>
    <property type="match status" value="1"/>
</dbReference>
<dbReference type="Gene3D" id="2.30.29.30">
    <property type="entry name" value="Pleckstrin-homology domain (PH domain)/Phosphotyrosine-binding domain (PTB)"/>
    <property type="match status" value="1"/>
</dbReference>
<dbReference type="InterPro" id="IPR011993">
    <property type="entry name" value="PH-like_dom_sf"/>
</dbReference>
<dbReference type="InterPro" id="IPR000156">
    <property type="entry name" value="Ran_bind_dom"/>
</dbReference>
<dbReference type="InterPro" id="IPR045255">
    <property type="entry name" value="RanBP1-like"/>
</dbReference>
<dbReference type="InterPro" id="IPR045256">
    <property type="entry name" value="RanBP1_RanBD"/>
</dbReference>
<dbReference type="PANTHER" id="PTHR23138">
    <property type="entry name" value="RAN BINDING PROTEIN"/>
    <property type="match status" value="1"/>
</dbReference>
<dbReference type="PANTHER" id="PTHR23138:SF133">
    <property type="entry name" value="RAN-BINDING PROTEIN 1 HOMOLOG A"/>
    <property type="match status" value="1"/>
</dbReference>
<dbReference type="Pfam" id="PF00638">
    <property type="entry name" value="Ran_BP1"/>
    <property type="match status" value="1"/>
</dbReference>
<dbReference type="SMART" id="SM00160">
    <property type="entry name" value="RanBD"/>
    <property type="match status" value="1"/>
</dbReference>
<dbReference type="SUPFAM" id="SSF50729">
    <property type="entry name" value="PH domain-like"/>
    <property type="match status" value="1"/>
</dbReference>
<dbReference type="PROSITE" id="PS50196">
    <property type="entry name" value="RANBD1"/>
    <property type="match status" value="1"/>
</dbReference>